<feature type="signal peptide" evidence="2">
    <location>
        <begin position="1"/>
        <end position="19"/>
    </location>
</feature>
<feature type="chain" id="PRO_0000023514" description="Penaeidin-3i">
    <location>
        <begin position="20"/>
        <end position="81"/>
    </location>
</feature>
<feature type="modified residue" description="Pyrrolidone carboxylic acid" evidence="1">
    <location>
        <position position="20"/>
    </location>
</feature>
<feature type="modified residue" description="Serine amide" evidence="1">
    <location>
        <position position="81"/>
    </location>
</feature>
<feature type="disulfide bond" evidence="1">
    <location>
        <begin position="55"/>
        <end position="73"/>
    </location>
</feature>
<feature type="disulfide bond" evidence="1">
    <location>
        <begin position="67"/>
        <end position="74"/>
    </location>
</feature>
<comment type="function">
    <text evidence="1">Antibacterial and antifungal activity. Presents chitin-binding activity (By similarity).</text>
</comment>
<comment type="subcellular location">
    <subcellularLocation>
        <location>Cytoplasmic granule</location>
    </subcellularLocation>
    <text>Cytoplasmic granules of hemocytes and to a lesser extent in small granules of hemocytes.</text>
</comment>
<comment type="similarity">
    <text evidence="3">Belongs to the penaeidin family.</text>
</comment>
<organism>
    <name type="scientific">Penaeus vannamei</name>
    <name type="common">Whiteleg shrimp</name>
    <name type="synonym">Litopenaeus vannamei</name>
    <dbReference type="NCBI Taxonomy" id="6689"/>
    <lineage>
        <taxon>Eukaryota</taxon>
        <taxon>Metazoa</taxon>
        <taxon>Ecdysozoa</taxon>
        <taxon>Arthropoda</taxon>
        <taxon>Crustacea</taxon>
        <taxon>Multicrustacea</taxon>
        <taxon>Malacostraca</taxon>
        <taxon>Eumalacostraca</taxon>
        <taxon>Eucarida</taxon>
        <taxon>Decapoda</taxon>
        <taxon>Dendrobranchiata</taxon>
        <taxon>Penaeoidea</taxon>
        <taxon>Penaeidae</taxon>
        <taxon>Penaeus</taxon>
    </lineage>
</organism>
<accession>Q963C5</accession>
<proteinExistence type="inferred from homology"/>
<name>PEN3I_PENVA</name>
<sequence>MRLVVCLVFLASFALVCQGQVYKGGYTRPIPRPPPFVRPLPGGPIGPYNGRPVSCRGISFSQARSCCSRLGRCCHVGKGYSG</sequence>
<keyword id="KW-0027">Amidation</keyword>
<keyword id="KW-0044">Antibiotic</keyword>
<keyword id="KW-0929">Antimicrobial</keyword>
<keyword id="KW-0147">Chitin-binding</keyword>
<keyword id="KW-1015">Disulfide bond</keyword>
<keyword id="KW-0295">Fungicide</keyword>
<keyword id="KW-0873">Pyrrolidone carboxylic acid</keyword>
<keyword id="KW-0732">Signal</keyword>
<dbReference type="EMBL" id="AF390145">
    <property type="protein sequence ID" value="AAK77538.1"/>
    <property type="molecule type" value="mRNA"/>
</dbReference>
<dbReference type="SMR" id="Q963C5"/>
<dbReference type="GO" id="GO:0005737">
    <property type="term" value="C:cytoplasm"/>
    <property type="evidence" value="ECO:0007669"/>
    <property type="project" value="InterPro"/>
</dbReference>
<dbReference type="GO" id="GO:0008061">
    <property type="term" value="F:chitin binding"/>
    <property type="evidence" value="ECO:0007669"/>
    <property type="project" value="UniProtKB-KW"/>
</dbReference>
<dbReference type="GO" id="GO:0042742">
    <property type="term" value="P:defense response to bacterium"/>
    <property type="evidence" value="ECO:0007669"/>
    <property type="project" value="UniProtKB-KW"/>
</dbReference>
<dbReference type="GO" id="GO:0050832">
    <property type="term" value="P:defense response to fungus"/>
    <property type="evidence" value="ECO:0007669"/>
    <property type="project" value="UniProtKB-KW"/>
</dbReference>
<dbReference type="GO" id="GO:0031640">
    <property type="term" value="P:killing of cells of another organism"/>
    <property type="evidence" value="ECO:0007669"/>
    <property type="project" value="UniProtKB-KW"/>
</dbReference>
<dbReference type="InterPro" id="IPR009226">
    <property type="entry name" value="Penaeidin"/>
</dbReference>
<dbReference type="Pfam" id="PF05927">
    <property type="entry name" value="Penaeidin"/>
    <property type="match status" value="1"/>
</dbReference>
<protein>
    <recommendedName>
        <fullName>Penaeidin-3i</fullName>
        <shortName>Pen-3i</shortName>
    </recommendedName>
</protein>
<evidence type="ECO:0000250" key="1"/>
<evidence type="ECO:0000255" key="2"/>
<evidence type="ECO:0000305" key="3"/>
<reference key="1">
    <citation type="journal article" date="2002" name="Immunogenetics">
        <title>Diversity of the penaeidin antimicrobial peptides in two shrimp species.</title>
        <authorList>
            <person name="Cuthbertson B.J."/>
            <person name="Shepard E.F."/>
            <person name="Chapman R.W."/>
            <person name="Gross P.S."/>
        </authorList>
    </citation>
    <scope>NUCLEOTIDE SEQUENCE [MRNA]</scope>
    <source>
        <tissue>Hemocyte</tissue>
    </source>
</reference>